<feature type="chain" id="PRO_0000362840" description="NAD(P)H-quinone oxidoreductase subunit 3, chloroplastic">
    <location>
        <begin position="1"/>
        <end position="120"/>
    </location>
</feature>
<feature type="transmembrane region" description="Helical" evidence="1">
    <location>
        <begin position="9"/>
        <end position="29"/>
    </location>
</feature>
<feature type="transmembrane region" description="Helical" evidence="1">
    <location>
        <begin position="64"/>
        <end position="84"/>
    </location>
</feature>
<feature type="transmembrane region" description="Helical" evidence="1">
    <location>
        <begin position="88"/>
        <end position="108"/>
    </location>
</feature>
<protein>
    <recommendedName>
        <fullName evidence="1">NAD(P)H-quinone oxidoreductase subunit 3, chloroplastic</fullName>
        <ecNumber evidence="1">7.1.1.-</ecNumber>
    </recommendedName>
    <alternativeName>
        <fullName evidence="1">NAD(P)H dehydrogenase subunit 3</fullName>
    </alternativeName>
    <alternativeName>
        <fullName evidence="1">NADH-plastoquinone oxidoreductase subunit 3</fullName>
    </alternativeName>
</protein>
<reference key="1">
    <citation type="journal article" date="2007" name="Mol. Phylogenet. Evol.">
        <title>Phylogenetic and evolutionary implications of complete chloroplast genome sequences of four early-diverging angiosperms: Buxus (Buxaceae), Chloranthus (Chloranthaceae), Dioscorea (Dioscoreaceae), and Illicium (Schisandraceae).</title>
        <authorList>
            <person name="Hansen D.R."/>
            <person name="Dastidar S.G."/>
            <person name="Cai Z."/>
            <person name="Penaflor C."/>
            <person name="Kuehl J.V."/>
            <person name="Boore J.L."/>
            <person name="Jansen R.K."/>
        </authorList>
    </citation>
    <scope>NUCLEOTIDE SEQUENCE [LARGE SCALE GENOMIC DNA]</scope>
</reference>
<comment type="function">
    <text evidence="1">NDH shuttles electrons from NAD(P)H:plastoquinone, via FMN and iron-sulfur (Fe-S) centers, to quinones in the photosynthetic chain and possibly in a chloroplast respiratory chain. The immediate electron acceptor for the enzyme in this species is believed to be plastoquinone. Couples the redox reaction to proton translocation, and thus conserves the redox energy in a proton gradient.</text>
</comment>
<comment type="catalytic activity">
    <reaction evidence="1">
        <text>a plastoquinone + NADH + (n+1) H(+)(in) = a plastoquinol + NAD(+) + n H(+)(out)</text>
        <dbReference type="Rhea" id="RHEA:42608"/>
        <dbReference type="Rhea" id="RHEA-COMP:9561"/>
        <dbReference type="Rhea" id="RHEA-COMP:9562"/>
        <dbReference type="ChEBI" id="CHEBI:15378"/>
        <dbReference type="ChEBI" id="CHEBI:17757"/>
        <dbReference type="ChEBI" id="CHEBI:57540"/>
        <dbReference type="ChEBI" id="CHEBI:57945"/>
        <dbReference type="ChEBI" id="CHEBI:62192"/>
    </reaction>
</comment>
<comment type="catalytic activity">
    <reaction evidence="1">
        <text>a plastoquinone + NADPH + (n+1) H(+)(in) = a plastoquinol + NADP(+) + n H(+)(out)</text>
        <dbReference type="Rhea" id="RHEA:42612"/>
        <dbReference type="Rhea" id="RHEA-COMP:9561"/>
        <dbReference type="Rhea" id="RHEA-COMP:9562"/>
        <dbReference type="ChEBI" id="CHEBI:15378"/>
        <dbReference type="ChEBI" id="CHEBI:17757"/>
        <dbReference type="ChEBI" id="CHEBI:57783"/>
        <dbReference type="ChEBI" id="CHEBI:58349"/>
        <dbReference type="ChEBI" id="CHEBI:62192"/>
    </reaction>
</comment>
<comment type="subunit">
    <text evidence="1">NDH is composed of at least 16 different subunits, 5 of which are encoded in the nucleus.</text>
</comment>
<comment type="subcellular location">
    <subcellularLocation>
        <location evidence="1">Plastid</location>
        <location evidence="1">Chloroplast thylakoid membrane</location>
        <topology evidence="1">Multi-pass membrane protein</topology>
    </subcellularLocation>
</comment>
<comment type="similarity">
    <text evidence="1">Belongs to the complex I subunit 3 family.</text>
</comment>
<dbReference type="EC" id="7.1.1.-" evidence="1"/>
<dbReference type="EMBL" id="EF380354">
    <property type="protein sequence ID" value="ABQ52524.1"/>
    <property type="molecule type" value="Genomic_DNA"/>
</dbReference>
<dbReference type="RefSeq" id="YP_001294275.1">
    <property type="nucleotide sequence ID" value="NC_009600.1"/>
</dbReference>
<dbReference type="SMR" id="A6MMU9"/>
<dbReference type="GeneID" id="5236805"/>
<dbReference type="GO" id="GO:0009535">
    <property type="term" value="C:chloroplast thylakoid membrane"/>
    <property type="evidence" value="ECO:0007669"/>
    <property type="project" value="UniProtKB-SubCell"/>
</dbReference>
<dbReference type="GO" id="GO:0030964">
    <property type="term" value="C:NADH dehydrogenase complex"/>
    <property type="evidence" value="ECO:0007669"/>
    <property type="project" value="TreeGrafter"/>
</dbReference>
<dbReference type="GO" id="GO:0008137">
    <property type="term" value="F:NADH dehydrogenase (ubiquinone) activity"/>
    <property type="evidence" value="ECO:0007669"/>
    <property type="project" value="InterPro"/>
</dbReference>
<dbReference type="GO" id="GO:0048038">
    <property type="term" value="F:quinone binding"/>
    <property type="evidence" value="ECO:0007669"/>
    <property type="project" value="UniProtKB-KW"/>
</dbReference>
<dbReference type="GO" id="GO:0019684">
    <property type="term" value="P:photosynthesis, light reaction"/>
    <property type="evidence" value="ECO:0007669"/>
    <property type="project" value="UniProtKB-UniRule"/>
</dbReference>
<dbReference type="FunFam" id="1.20.58.1610:FF:000001">
    <property type="entry name" value="NAD(P)H-quinone oxidoreductase subunit 3, chloroplastic"/>
    <property type="match status" value="1"/>
</dbReference>
<dbReference type="Gene3D" id="1.20.58.1610">
    <property type="entry name" value="NADH:ubiquinone/plastoquinone oxidoreductase, chain 3"/>
    <property type="match status" value="1"/>
</dbReference>
<dbReference type="HAMAP" id="MF_01394">
    <property type="entry name" value="NDH1_NuoA"/>
    <property type="match status" value="1"/>
</dbReference>
<dbReference type="InterPro" id="IPR023043">
    <property type="entry name" value="NAD(P)H_OxRDtase_bac/plastid"/>
</dbReference>
<dbReference type="InterPro" id="IPR000440">
    <property type="entry name" value="NADH_UbQ/plastoQ_OxRdtase_su3"/>
</dbReference>
<dbReference type="InterPro" id="IPR038430">
    <property type="entry name" value="NDAH_ubi_oxred_su3_sf"/>
</dbReference>
<dbReference type="PANTHER" id="PTHR11058">
    <property type="entry name" value="NADH-UBIQUINONE OXIDOREDUCTASE CHAIN 3"/>
    <property type="match status" value="1"/>
</dbReference>
<dbReference type="PANTHER" id="PTHR11058:SF9">
    <property type="entry name" value="NADH-UBIQUINONE OXIDOREDUCTASE CHAIN 3"/>
    <property type="match status" value="1"/>
</dbReference>
<dbReference type="Pfam" id="PF00507">
    <property type="entry name" value="Oxidored_q4"/>
    <property type="match status" value="1"/>
</dbReference>
<proteinExistence type="inferred from homology"/>
<name>NU3C_ILLOL</name>
<keyword id="KW-0150">Chloroplast</keyword>
<keyword id="KW-0472">Membrane</keyword>
<keyword id="KW-0520">NAD</keyword>
<keyword id="KW-0521">NADP</keyword>
<keyword id="KW-0934">Plastid</keyword>
<keyword id="KW-0618">Plastoquinone</keyword>
<keyword id="KW-0874">Quinone</keyword>
<keyword id="KW-0793">Thylakoid</keyword>
<keyword id="KW-1278">Translocase</keyword>
<keyword id="KW-0812">Transmembrane</keyword>
<keyword id="KW-1133">Transmembrane helix</keyword>
<keyword id="KW-0813">Transport</keyword>
<organism>
    <name type="scientific">Illicium oligandrum</name>
    <name type="common">Star anise</name>
    <dbReference type="NCBI Taxonomy" id="145286"/>
    <lineage>
        <taxon>Eukaryota</taxon>
        <taxon>Viridiplantae</taxon>
        <taxon>Streptophyta</taxon>
        <taxon>Embryophyta</taxon>
        <taxon>Tracheophyta</taxon>
        <taxon>Spermatophyta</taxon>
        <taxon>Magnoliopsida</taxon>
        <taxon>Austrobaileyales</taxon>
        <taxon>Schisandraceae</taxon>
        <taxon>Illicium</taxon>
    </lineage>
</organism>
<sequence length="120" mass="13786">MFLLHEYDIFWAFLMISSVIPILAFLISGVLAPIREGPEKLSSYESGIEPMGDAWLQFRIRYYMFALVFVVFDVETVFLYPWAMSFDVLGVSAFIEALIFVLIPIVGSVYAWRKGALEWS</sequence>
<accession>A6MMU9</accession>
<evidence type="ECO:0000255" key="1">
    <source>
        <dbReference type="HAMAP-Rule" id="MF_01394"/>
    </source>
</evidence>
<geneLocation type="chloroplast"/>
<gene>
    <name evidence="1" type="primary">ndhC</name>
</gene>